<accession>B6JN39</accession>
<reference key="1">
    <citation type="submission" date="2008-10" db="EMBL/GenBank/DDBJ databases">
        <title>The complete genome sequence of Helicobacter pylori strain P12.</title>
        <authorList>
            <person name="Fischer W."/>
            <person name="Windhager L."/>
            <person name="Karnholz A."/>
            <person name="Zeiller M."/>
            <person name="Zimmer R."/>
            <person name="Haas R."/>
        </authorList>
    </citation>
    <scope>NUCLEOTIDE SEQUENCE [LARGE SCALE GENOMIC DNA]</scope>
    <source>
        <strain>P12</strain>
    </source>
</reference>
<feature type="chain" id="PRO_1000120971" description="Large ribosomal subunit protein uL10">
    <location>
        <begin position="1"/>
        <end position="164"/>
    </location>
</feature>
<proteinExistence type="inferred from homology"/>
<evidence type="ECO:0000255" key="1">
    <source>
        <dbReference type="HAMAP-Rule" id="MF_00362"/>
    </source>
</evidence>
<evidence type="ECO:0000305" key="2"/>
<organism>
    <name type="scientific">Helicobacter pylori (strain P12)</name>
    <dbReference type="NCBI Taxonomy" id="570508"/>
    <lineage>
        <taxon>Bacteria</taxon>
        <taxon>Pseudomonadati</taxon>
        <taxon>Campylobacterota</taxon>
        <taxon>Epsilonproteobacteria</taxon>
        <taxon>Campylobacterales</taxon>
        <taxon>Helicobacteraceae</taxon>
        <taxon>Helicobacter</taxon>
    </lineage>
</organism>
<gene>
    <name evidence="1" type="primary">rplJ</name>
    <name type="ordered locus">HPP12_1165</name>
</gene>
<comment type="function">
    <text evidence="1">Forms part of the ribosomal stalk, playing a central role in the interaction of the ribosome with GTP-bound translation factors.</text>
</comment>
<comment type="subunit">
    <text evidence="1">Part of the ribosomal stalk of the 50S ribosomal subunit. The N-terminus interacts with L11 and the large rRNA to form the base of the stalk. The C-terminus forms an elongated spine to which L12 dimers bind in a sequential fashion forming a multimeric L10(L12)X complex.</text>
</comment>
<comment type="similarity">
    <text evidence="1">Belongs to the universal ribosomal protein uL10 family.</text>
</comment>
<dbReference type="EMBL" id="CP001217">
    <property type="protein sequence ID" value="ACJ08317.1"/>
    <property type="molecule type" value="Genomic_DNA"/>
</dbReference>
<dbReference type="SMR" id="B6JN39"/>
<dbReference type="KEGG" id="hpp:HPP12_1165"/>
<dbReference type="HOGENOM" id="CLU_092227_2_2_7"/>
<dbReference type="Proteomes" id="UP000008198">
    <property type="component" value="Chromosome"/>
</dbReference>
<dbReference type="GO" id="GO:0015934">
    <property type="term" value="C:large ribosomal subunit"/>
    <property type="evidence" value="ECO:0007669"/>
    <property type="project" value="InterPro"/>
</dbReference>
<dbReference type="GO" id="GO:0070180">
    <property type="term" value="F:large ribosomal subunit rRNA binding"/>
    <property type="evidence" value="ECO:0007669"/>
    <property type="project" value="UniProtKB-UniRule"/>
</dbReference>
<dbReference type="GO" id="GO:0003735">
    <property type="term" value="F:structural constituent of ribosome"/>
    <property type="evidence" value="ECO:0007669"/>
    <property type="project" value="InterPro"/>
</dbReference>
<dbReference type="GO" id="GO:0006412">
    <property type="term" value="P:translation"/>
    <property type="evidence" value="ECO:0007669"/>
    <property type="project" value="UniProtKB-UniRule"/>
</dbReference>
<dbReference type="CDD" id="cd05797">
    <property type="entry name" value="Ribosomal_L10"/>
    <property type="match status" value="1"/>
</dbReference>
<dbReference type="FunFam" id="3.30.70.1730:FF:000009">
    <property type="entry name" value="50S ribosomal protein L10"/>
    <property type="match status" value="1"/>
</dbReference>
<dbReference type="Gene3D" id="3.30.70.1730">
    <property type="match status" value="1"/>
</dbReference>
<dbReference type="HAMAP" id="MF_00362">
    <property type="entry name" value="Ribosomal_uL10"/>
    <property type="match status" value="1"/>
</dbReference>
<dbReference type="InterPro" id="IPR001790">
    <property type="entry name" value="Ribosomal_uL10"/>
</dbReference>
<dbReference type="InterPro" id="IPR043141">
    <property type="entry name" value="Ribosomal_uL10-like_sf"/>
</dbReference>
<dbReference type="InterPro" id="IPR022973">
    <property type="entry name" value="Ribosomal_uL10_bac"/>
</dbReference>
<dbReference type="InterPro" id="IPR047865">
    <property type="entry name" value="Ribosomal_uL10_bac_type"/>
</dbReference>
<dbReference type="InterPro" id="IPR002363">
    <property type="entry name" value="Ribosomal_uL10_CS_bac"/>
</dbReference>
<dbReference type="NCBIfam" id="NF000955">
    <property type="entry name" value="PRK00099.1-1"/>
    <property type="match status" value="1"/>
</dbReference>
<dbReference type="PANTHER" id="PTHR11560">
    <property type="entry name" value="39S RIBOSOMAL PROTEIN L10, MITOCHONDRIAL"/>
    <property type="match status" value="1"/>
</dbReference>
<dbReference type="Pfam" id="PF00466">
    <property type="entry name" value="Ribosomal_L10"/>
    <property type="match status" value="1"/>
</dbReference>
<dbReference type="SUPFAM" id="SSF160369">
    <property type="entry name" value="Ribosomal protein L10-like"/>
    <property type="match status" value="1"/>
</dbReference>
<dbReference type="PROSITE" id="PS01109">
    <property type="entry name" value="RIBOSOMAL_L10"/>
    <property type="match status" value="1"/>
</dbReference>
<protein>
    <recommendedName>
        <fullName evidence="1">Large ribosomal subunit protein uL10</fullName>
    </recommendedName>
    <alternativeName>
        <fullName evidence="2">50S ribosomal protein L10</fullName>
    </alternativeName>
</protein>
<keyword id="KW-0687">Ribonucleoprotein</keyword>
<keyword id="KW-0689">Ribosomal protein</keyword>
<keyword id="KW-0694">RNA-binding</keyword>
<keyword id="KW-0699">rRNA-binding</keyword>
<name>RL10_HELP2</name>
<sequence>MQKQHQRQHKVELVANLKSQFDSAKALLICDYKGLSVRKLEALRNKARIQGIKVQVIKNTLAHIAMKEAGCADLDLKETNVFLWGDDQIALSKLVFDFQKEHKDHFVLKAGLFDKESVSVAHVEAVSKLPSKEELMGMLLSVWTAPARYFVTGLDNLRKAKEEN</sequence>